<dbReference type="EC" id="2.4.2.8" evidence="1"/>
<dbReference type="EMBL" id="CP002565">
    <property type="protein sequence ID" value="AEB69325.1"/>
    <property type="molecule type" value="Genomic_DNA"/>
</dbReference>
<dbReference type="RefSeq" id="WP_013720346.1">
    <property type="nucleotide sequence ID" value="NC_015416.1"/>
</dbReference>
<dbReference type="SMR" id="F4BT36"/>
<dbReference type="FunCoup" id="F4BT36">
    <property type="interactions" value="46"/>
</dbReference>
<dbReference type="STRING" id="990316.MCON_2988"/>
<dbReference type="GeneID" id="10462281"/>
<dbReference type="KEGG" id="mcj:MCON_2988"/>
<dbReference type="HOGENOM" id="CLU_126376_0_0_2"/>
<dbReference type="InParanoid" id="F4BT36"/>
<dbReference type="OrthoDB" id="8323at2157"/>
<dbReference type="UniPathway" id="UPA00591">
    <property type="reaction ID" value="UER00648"/>
</dbReference>
<dbReference type="Proteomes" id="UP000007807">
    <property type="component" value="Chromosome"/>
</dbReference>
<dbReference type="GO" id="GO:0005737">
    <property type="term" value="C:cytoplasm"/>
    <property type="evidence" value="ECO:0007669"/>
    <property type="project" value="UniProtKB-SubCell"/>
</dbReference>
<dbReference type="GO" id="GO:0052657">
    <property type="term" value="F:guanine phosphoribosyltransferase activity"/>
    <property type="evidence" value="ECO:0007669"/>
    <property type="project" value="RHEA"/>
</dbReference>
<dbReference type="GO" id="GO:0004422">
    <property type="term" value="F:hypoxanthine phosphoribosyltransferase activity"/>
    <property type="evidence" value="ECO:0007669"/>
    <property type="project" value="UniProtKB-UniRule"/>
</dbReference>
<dbReference type="GO" id="GO:0032264">
    <property type="term" value="P:IMP salvage"/>
    <property type="evidence" value="ECO:0007669"/>
    <property type="project" value="UniProtKB-UniRule"/>
</dbReference>
<dbReference type="GO" id="GO:0006166">
    <property type="term" value="P:purine ribonucleoside salvage"/>
    <property type="evidence" value="ECO:0007669"/>
    <property type="project" value="UniProtKB-KW"/>
</dbReference>
<dbReference type="CDD" id="cd06223">
    <property type="entry name" value="PRTases_typeI"/>
    <property type="match status" value="1"/>
</dbReference>
<dbReference type="Gene3D" id="3.40.50.2020">
    <property type="match status" value="1"/>
</dbReference>
<dbReference type="HAMAP" id="MF_01467">
    <property type="entry name" value="Hypx_phosphoribosyltr"/>
    <property type="match status" value="1"/>
</dbReference>
<dbReference type="InterPro" id="IPR026597">
    <property type="entry name" value="HGPRTase-like"/>
</dbReference>
<dbReference type="InterPro" id="IPR000836">
    <property type="entry name" value="PRibTrfase_dom"/>
</dbReference>
<dbReference type="InterPro" id="IPR029057">
    <property type="entry name" value="PRTase-like"/>
</dbReference>
<dbReference type="InterPro" id="IPR050118">
    <property type="entry name" value="Pur/Pyrimidine_PRTase"/>
</dbReference>
<dbReference type="NCBIfam" id="NF040646">
    <property type="entry name" value="HPT_Archaea"/>
    <property type="match status" value="1"/>
</dbReference>
<dbReference type="NCBIfam" id="NF002635">
    <property type="entry name" value="PRK02304.1-4"/>
    <property type="match status" value="1"/>
</dbReference>
<dbReference type="PANTHER" id="PTHR43864">
    <property type="entry name" value="HYPOXANTHINE/GUANINE PHOSPHORIBOSYLTRANSFERASE"/>
    <property type="match status" value="1"/>
</dbReference>
<dbReference type="PANTHER" id="PTHR43864:SF1">
    <property type="entry name" value="XANTHINE PHOSPHORIBOSYLTRANSFERASE"/>
    <property type="match status" value="1"/>
</dbReference>
<dbReference type="Pfam" id="PF00156">
    <property type="entry name" value="Pribosyltran"/>
    <property type="match status" value="1"/>
</dbReference>
<dbReference type="SUPFAM" id="SSF53271">
    <property type="entry name" value="PRTase-like"/>
    <property type="match status" value="1"/>
</dbReference>
<dbReference type="PROSITE" id="PS00103">
    <property type="entry name" value="PUR_PYR_PR_TRANSFER"/>
    <property type="match status" value="1"/>
</dbReference>
<organism>
    <name type="scientific">Methanothrix soehngenii (strain ATCC 5969 / DSM 3671 / JCM 10134 / NBRC 103675 / OCM 69 / GP-6)</name>
    <name type="common">Methanosaeta concilii</name>
    <dbReference type="NCBI Taxonomy" id="990316"/>
    <lineage>
        <taxon>Archaea</taxon>
        <taxon>Methanobacteriati</taxon>
        <taxon>Methanobacteriota</taxon>
        <taxon>Stenosarchaea group</taxon>
        <taxon>Methanomicrobia</taxon>
        <taxon>Methanotrichales</taxon>
        <taxon>Methanotrichaceae</taxon>
        <taxon>Methanothrix</taxon>
    </lineage>
</organism>
<protein>
    <recommendedName>
        <fullName evidence="1">Hypoxanthine/guanine phosphoribosyltransferase</fullName>
        <shortName evidence="1">HGPRTase</shortName>
        <ecNumber evidence="1">2.4.2.8</ecNumber>
    </recommendedName>
</protein>
<sequence>MLERLKKSLLEAPVFKRGEYDYFIHPITDGVPEIRPDLIREVTANIVRIANLDVDKIVTVEAMGIPIGIVLSILCDIPLVIIRKRKYGLPNEVEISQVTGYSRSQLYLNGINRGDRVIVVDDVISTGGTLQATLDSMELAGAEVMDTVIVVERGNGAELLRSKGYNLKTMVRVKVEGGRVSEVEPGISK</sequence>
<reference key="1">
    <citation type="journal article" date="2011" name="J. Bacteriol.">
        <title>Complete genome sequence of Methanosaeta concilii, a specialist in aceticlastic methanogenesis.</title>
        <authorList>
            <person name="Barber R.D."/>
            <person name="Zhang L."/>
            <person name="Harnack M."/>
            <person name="Olson M.V."/>
            <person name="Kaul R."/>
            <person name="Ingram-Smith C."/>
            <person name="Smith K.S."/>
        </authorList>
    </citation>
    <scope>NUCLEOTIDE SEQUENCE [LARGE SCALE GENOMIC DNA]</scope>
    <source>
        <strain>ATCC 5969 / DSM 3671 / JCM 10134 / NBRC 103675 / OCM 69 / GP-6</strain>
    </source>
</reference>
<evidence type="ECO:0000255" key="1">
    <source>
        <dbReference type="HAMAP-Rule" id="MF_01467"/>
    </source>
</evidence>
<proteinExistence type="inferred from homology"/>
<comment type="function">
    <text evidence="1">Catalyzes a salvage reaction resulting in the formation of IMP that is energically less costly than de novo synthesis.</text>
</comment>
<comment type="catalytic activity">
    <reaction evidence="1">
        <text>IMP + diphosphate = hypoxanthine + 5-phospho-alpha-D-ribose 1-diphosphate</text>
        <dbReference type="Rhea" id="RHEA:17973"/>
        <dbReference type="ChEBI" id="CHEBI:17368"/>
        <dbReference type="ChEBI" id="CHEBI:33019"/>
        <dbReference type="ChEBI" id="CHEBI:58017"/>
        <dbReference type="ChEBI" id="CHEBI:58053"/>
        <dbReference type="EC" id="2.4.2.8"/>
    </reaction>
</comment>
<comment type="catalytic activity">
    <reaction evidence="1">
        <text>GMP + diphosphate = guanine + 5-phospho-alpha-D-ribose 1-diphosphate</text>
        <dbReference type="Rhea" id="RHEA:25424"/>
        <dbReference type="ChEBI" id="CHEBI:16235"/>
        <dbReference type="ChEBI" id="CHEBI:33019"/>
        <dbReference type="ChEBI" id="CHEBI:58017"/>
        <dbReference type="ChEBI" id="CHEBI:58115"/>
        <dbReference type="EC" id="2.4.2.8"/>
    </reaction>
</comment>
<comment type="pathway">
    <text evidence="1">Purine metabolism; IMP biosynthesis via salvage pathway; IMP from hypoxanthine: step 1/1.</text>
</comment>
<comment type="subunit">
    <text evidence="1">Homodimer.</text>
</comment>
<comment type="subcellular location">
    <subcellularLocation>
        <location evidence="1">Cytoplasm</location>
    </subcellularLocation>
</comment>
<comment type="similarity">
    <text evidence="1">Belongs to the purine/pyrimidine phosphoribosyltransferase family. Archaeal HPRT subfamily.</text>
</comment>
<keyword id="KW-0963">Cytoplasm</keyword>
<keyword id="KW-0328">Glycosyltransferase</keyword>
<keyword id="KW-0660">Purine salvage</keyword>
<keyword id="KW-1185">Reference proteome</keyword>
<keyword id="KW-0808">Transferase</keyword>
<feature type="chain" id="PRO_0000415477" description="Hypoxanthine/guanine phosphoribosyltransferase">
    <location>
        <begin position="1"/>
        <end position="189"/>
    </location>
</feature>
<accession>F4BT36</accession>
<gene>
    <name evidence="1" type="primary">hpt</name>
    <name type="ordered locus">MCON_2988</name>
</gene>
<name>HPRT_METSG</name>